<dbReference type="EMBL" id="M28830">
    <property type="protein sequence ID" value="AAA32329.1"/>
    <property type="molecule type" value="Genomic_DNA"/>
</dbReference>
<dbReference type="PIR" id="JS0192">
    <property type="entry name" value="WRBP15"/>
</dbReference>
<dbReference type="GO" id="GO:0006260">
    <property type="term" value="P:DNA replication"/>
    <property type="evidence" value="ECO:0007669"/>
    <property type="project" value="UniProtKB-KW"/>
</dbReference>
<dbReference type="GO" id="GO:0039693">
    <property type="term" value="P:viral DNA genome replication"/>
    <property type="evidence" value="ECO:0007669"/>
    <property type="project" value="UniProtKB-KW"/>
</dbReference>
<dbReference type="InterPro" id="IPR035184">
    <property type="entry name" value="Phage_Gp17"/>
</dbReference>
<dbReference type="Pfam" id="PF17549">
    <property type="entry name" value="Phage_Gp17"/>
    <property type="match status" value="1"/>
</dbReference>
<accession>P15850</accession>
<sequence length="153" mass="17590">MNNYQLTINEVIEIINRNTDINKLVAKKDNLYPTDLYDLDKQQLIAIILNSDFALSSIKRALLEVTVEELREQDNDDDLDEIDNELYEGAEAADVPRETIVKVFEADKSIVTFNGEKLKHYVNVDDNSSSVDEVKKIAKEISEHDFNENKENK</sequence>
<comment type="function">
    <text evidence="1">Involved in the replication of viral DNA. It is required at the very beginning of the virus amplification, conditions in which a low number of viral DNA molecules enter the host cell, possibly to recruit the limiting amount of initiation factors at the replication origins. Once the infection process is established and the other replication proteins reach optimal concentration, it becomes dispensable. Optimizes the binding of protein p6 at the viral DNA ends, thus favoring the initiation of replication.</text>
</comment>
<comment type="subunit">
    <text evidence="1">Homodimer. Interacts with the histone-like protein p6; this interaction optimizes the binding of protein p6 at the viral DNA ends, thus favoring the initiation of replication.</text>
</comment>
<comment type="similarity">
    <text evidence="2">Belongs to the phi29likevirus protein p56 family.</text>
</comment>
<evidence type="ECO:0000250" key="1">
    <source>
        <dbReference type="UniProtKB" id="P03686"/>
    </source>
</evidence>
<evidence type="ECO:0000305" key="2"/>
<organismHost>
    <name type="scientific">Bacillus subtilis</name>
    <dbReference type="NCBI Taxonomy" id="1423"/>
</organismHost>
<gene>
    <name type="primary">17</name>
</gene>
<keyword id="KW-0235">DNA replication</keyword>
<keyword id="KW-0244">Early protein</keyword>
<keyword id="KW-1194">Viral DNA replication</keyword>
<name>GP17_BPPH5</name>
<feature type="chain" id="PRO_0000106605" description="DNA replication protein 17">
    <location>
        <begin position="1"/>
        <end position="153"/>
    </location>
</feature>
<organism>
    <name type="scientific">Bacillus phage phi15</name>
    <name type="common">Bacteriophage phi-15</name>
    <dbReference type="NCBI Taxonomy" id="10755"/>
    <lineage>
        <taxon>Viruses</taxon>
        <taxon>Duplodnaviria</taxon>
        <taxon>Heunggongvirae</taxon>
        <taxon>Uroviricota</taxon>
        <taxon>Caudoviricetes</taxon>
        <taxon>Salasmaviridae</taxon>
        <taxon>Picovirinae</taxon>
        <taxon>Salasvirus</taxon>
        <taxon>Salasvirus phi29</taxon>
    </lineage>
</organism>
<reference key="1">
    <citation type="journal article" date="1989" name="Gene">
        <title>Nucleotide sequence of the right early region of Bacillus phage phi 15 and comparison with related phages: reorganization of gene 17 during evolution.</title>
        <authorList>
            <person name="Benes V."/>
            <person name="Arnold L."/>
            <person name="Smrt J."/>
            <person name="Paces V."/>
        </authorList>
    </citation>
    <scope>NUCLEOTIDE SEQUENCE [GENOMIC DNA]</scope>
</reference>
<proteinExistence type="inferred from homology"/>
<protein>
    <recommendedName>
        <fullName>DNA replication protein 17</fullName>
    </recommendedName>
    <alternativeName>
        <fullName>Gene product 17</fullName>
        <shortName>gp17</shortName>
    </alternativeName>
    <alternativeName>
        <fullName>Protein p17</fullName>
    </alternativeName>
</protein>